<evidence type="ECO:0000250" key="1">
    <source>
        <dbReference type="UniProtKB" id="O14924"/>
    </source>
</evidence>
<evidence type="ECO:0000250" key="2">
    <source>
        <dbReference type="UniProtKB" id="Q8CGE9"/>
    </source>
</evidence>
<evidence type="ECO:0000255" key="3">
    <source>
        <dbReference type="PROSITE-ProRule" id="PRU00097"/>
    </source>
</evidence>
<evidence type="ECO:0000255" key="4">
    <source>
        <dbReference type="PROSITE-ProRule" id="PRU00143"/>
    </source>
</evidence>
<evidence type="ECO:0000255" key="5">
    <source>
        <dbReference type="PROSITE-ProRule" id="PRU00148"/>
    </source>
</evidence>
<evidence type="ECO:0000255" key="6">
    <source>
        <dbReference type="PROSITE-ProRule" id="PRU00171"/>
    </source>
</evidence>
<evidence type="ECO:0000255" key="7">
    <source>
        <dbReference type="PROSITE-ProRule" id="PRU00262"/>
    </source>
</evidence>
<evidence type="ECO:0000256" key="8">
    <source>
        <dbReference type="SAM" id="MobiDB-lite"/>
    </source>
</evidence>
<evidence type="ECO:0000269" key="9">
    <source>
    </source>
</evidence>
<evidence type="ECO:0000269" key="10">
    <source>
    </source>
</evidence>
<evidence type="ECO:0000269" key="11">
    <source>
    </source>
</evidence>
<evidence type="ECO:0000269" key="12">
    <source>
    </source>
</evidence>
<evidence type="ECO:0000305" key="13"/>
<evidence type="ECO:0007744" key="14">
    <source>
    </source>
</evidence>
<feature type="chain" id="PRO_0000204214" description="Regulator of G-protein signaling 12">
    <location>
        <begin position="1"/>
        <end position="1387"/>
    </location>
</feature>
<feature type="domain" description="PDZ" evidence="4">
    <location>
        <begin position="21"/>
        <end position="97"/>
    </location>
</feature>
<feature type="domain" description="PID" evidence="5">
    <location>
        <begin position="227"/>
        <end position="339"/>
    </location>
</feature>
<feature type="domain" description="RGS" evidence="6">
    <location>
        <begin position="715"/>
        <end position="832"/>
    </location>
</feature>
<feature type="domain" description="RBD 1" evidence="7">
    <location>
        <begin position="962"/>
        <end position="1032"/>
    </location>
</feature>
<feature type="domain" description="RBD 2" evidence="7">
    <location>
        <begin position="1034"/>
        <end position="1104"/>
    </location>
</feature>
<feature type="domain" description="GoLoco" evidence="3">
    <location>
        <begin position="1187"/>
        <end position="1209"/>
    </location>
</feature>
<feature type="region of interest" description="Disordered" evidence="8">
    <location>
        <begin position="409"/>
        <end position="428"/>
    </location>
</feature>
<feature type="region of interest" description="Disordered" evidence="8">
    <location>
        <begin position="442"/>
        <end position="488"/>
    </location>
</feature>
<feature type="region of interest" description="Disordered" evidence="8">
    <location>
        <begin position="620"/>
        <end position="650"/>
    </location>
</feature>
<feature type="region of interest" description="Disordered" evidence="8">
    <location>
        <begin position="842"/>
        <end position="934"/>
    </location>
</feature>
<feature type="region of interest" description="Disordered" evidence="8">
    <location>
        <begin position="1103"/>
        <end position="1168"/>
    </location>
</feature>
<feature type="region of interest" description="Disordered" evidence="8">
    <location>
        <begin position="1224"/>
        <end position="1325"/>
    </location>
</feature>
<feature type="region of interest" description="Disordered" evidence="8">
    <location>
        <begin position="1349"/>
        <end position="1387"/>
    </location>
</feature>
<feature type="compositionally biased region" description="Polar residues" evidence="8">
    <location>
        <begin position="412"/>
        <end position="428"/>
    </location>
</feature>
<feature type="compositionally biased region" description="Low complexity" evidence="8">
    <location>
        <begin position="849"/>
        <end position="869"/>
    </location>
</feature>
<feature type="compositionally biased region" description="Basic and acidic residues" evidence="8">
    <location>
        <begin position="914"/>
        <end position="923"/>
    </location>
</feature>
<feature type="compositionally biased region" description="Basic and acidic residues" evidence="8">
    <location>
        <begin position="1103"/>
        <end position="1117"/>
    </location>
</feature>
<feature type="compositionally biased region" description="Polar residues" evidence="8">
    <location>
        <begin position="1122"/>
        <end position="1133"/>
    </location>
</feature>
<feature type="compositionally biased region" description="Basic and acidic residues" evidence="8">
    <location>
        <begin position="1151"/>
        <end position="1168"/>
    </location>
</feature>
<feature type="compositionally biased region" description="Low complexity" evidence="8">
    <location>
        <begin position="1261"/>
        <end position="1280"/>
    </location>
</feature>
<feature type="compositionally biased region" description="Polar residues" evidence="8">
    <location>
        <begin position="1315"/>
        <end position="1325"/>
    </location>
</feature>
<feature type="compositionally biased region" description="Pro residues" evidence="8">
    <location>
        <begin position="1367"/>
        <end position="1380"/>
    </location>
</feature>
<feature type="modified residue" description="Phosphoserine" evidence="14">
    <location>
        <position position="171"/>
    </location>
</feature>
<feature type="modified residue" description="Phosphoserine" evidence="2">
    <location>
        <position position="194"/>
    </location>
</feature>
<feature type="modified residue" description="Omega-N-methylarginine" evidence="1">
    <location>
        <position position="524"/>
    </location>
</feature>
<feature type="modified residue" description="Omega-N-methylarginine" evidence="2">
    <location>
        <position position="633"/>
    </location>
</feature>
<feature type="modified residue" description="Phosphoserine" evidence="14">
    <location>
        <position position="661"/>
    </location>
</feature>
<feature type="modified residue" description="Phosphoserine" evidence="14">
    <location>
        <position position="671"/>
    </location>
</feature>
<feature type="modified residue" description="Phosphoserine" evidence="2">
    <location>
        <position position="850"/>
    </location>
</feature>
<feature type="modified residue" description="Phosphoserine" evidence="14">
    <location>
        <position position="879"/>
    </location>
</feature>
<feature type="modified residue" description="Phosphoserine" evidence="2">
    <location>
        <position position="943"/>
    </location>
</feature>
<feature type="cross-link" description="Glycyl lysine isopeptide (Lys-Gly) (interchain with G-Cter in SUMO2)" evidence="1">
    <location>
        <position position="195"/>
    </location>
</feature>
<feature type="splice variant" id="VSP_005688" description="In isoform 2." evidence="13">
    <location>
        <begin position="1"/>
        <end position="648"/>
    </location>
</feature>
<feature type="splice variant" id="VSP_005689" description="In isoform 2." evidence="13">
    <original>SFGRSRRFSLTRSLDDLE</original>
    <variation>MNLEKGLSDDSDVFIDQQ</variation>
    <location>
        <begin position="649"/>
        <end position="666"/>
    </location>
</feature>
<comment type="function">
    <text evidence="9 12">Regulates G protein-coupled receptor signaling cascades. Inhibits signal transduction by increasing the GTPase activity of G protein alpha subunits, thereby driving them into their inactive GDP-bound form.</text>
</comment>
<comment type="subunit">
    <text evidence="9">Interacts with GNAI1, GNAI2 and GNAI3; the interactions are GDP-dependent.</text>
</comment>
<comment type="subcellular location">
    <subcellularLocation>
        <location evidence="10">Nucleus</location>
    </subcellularLocation>
    <subcellularLocation>
        <location evidence="10">Cytoplasm</location>
    </subcellularLocation>
    <subcellularLocation>
        <location evidence="10">Cell projection</location>
        <location evidence="10">Dendrite</location>
    </subcellularLocation>
    <subcellularLocation>
        <location evidence="10">Synapse</location>
    </subcellularLocation>
</comment>
<comment type="alternative products">
    <event type="alternative splicing"/>
    <isoform>
        <id>O08774-1</id>
        <name>1</name>
        <sequence type="displayed"/>
    </isoform>
    <isoform>
        <id>O08774-2</id>
        <name>2</name>
        <name>PDZ-less</name>
        <sequence type="described" ref="VSP_005688 VSP_005689"/>
    </isoform>
    <text>Additional isoforms seem to exist.</text>
</comment>
<comment type="tissue specificity">
    <text evidence="10 11">Detected in brain cortex GABAergic neurons, in striatum and substantia nigra, and in the Purkinje cell layer in the cerebellum and hippocampus (at protein level) (PubMed:16819986). Expressed at high levels in brain and lung and lower levels in testis, heart, and spleen (PubMed:9168931).</text>
</comment>
<comment type="domain">
    <text>The GoLoco domain is necessary for interaction with GNAI1, GNAI2 and GNAI3.</text>
</comment>
<gene>
    <name type="primary">Rgs12</name>
</gene>
<accession>O08774</accession>
<accession>O88383</accession>
<sequence>MYRAGEPGKRQSGPAPPRVRSVEVARGRAGYGFTLSGQAPCVLSCVMRGSPADFVGLRAGDQILAINEINVKKASHEDVVKLIGKCSGVLRMVISEGSSHVEPSSSDEEGGLCEGKGWLRPKLDSKALGINRAERVVEEVQSGGIFNMIFESPSLCASGSEPLKLKQRSLSESAALRLDVGQDSLCTPHPSMLSKEEISKVINDDSVFTVGLDNHDDFGLDASILNVAMVVGYLGSIELPSTSSNLEHDSLQAIRGCMRRLRAEQKIHSLVTMKVMHDCVQLVTDRAGVVAEYPAEKLAFSAVCPDDRRFFGLVTMQTNDDGCLAQEDEGALRTSCHVFMVDPDLFHHKIHQGIARRFGFACTADPDTSGCLEFPASSLPVLQFISVLYRDMGELIEGVRARAFLDGDADAHQNNSTSSNSDSGIGNFNQEEKSNRVLVVDLGGGSSRHGQGSSPGWESVSGRGSQPWSAPWNGTFCHDSEAGSPLETSPNTDRFWDLTKHSGPVFHMEVPPATLRSSIPPSKRGATGSSCGFNQRWLPVHVLQEWQCGHASDQESYTDSTDGWSSVNCGTLPPPMSKIPADRYRVEGSFAQAPLSTQKRDWSRKAFGMQNLFGPHRNVRKTKEDKKSSKLGRGVALAQTSQRTSARRSFGRSRRFSLTRSLDDLESATVSDGELTGADLKDCISNNSLSSNASLPSVQSCRRLRERRVASWAVSFERLLQDPVGVRYFSDFLRKEFSEENILFWQACECFSHVPAHDKKELSYRAREIFSKFLCSKATTPVNIDSQAQLADDILNAPHPDMFKEQQLQIFNLMKFDSYTRFLKSQLYQECVLAEVEGRTLPDSQQVPSSPASKHSISSDHSNVSTPKKLSGKSKSGRSLNEDVGEEDSEKKRKGAFFSWSRSRSTGRSQKKKDHGDHAHDALHANGGLCRRESQGSVSSAGSLDLSEACRTSALERDKAAKHCCVHLPDGTSCVVAVKSGFSIKEILSGLCERHGINGAAVDLFLVGGDKPLVLHQDSSILATRDLRLGKRTLFRLDLVPINRSVGLKAKPTKPVTEVLRPVVAKYGLDLGSLLVRLSGEKEPLDLGAPISSLDGQRVILEERDPSRGKVSTEKQKGAPVKQSSAVNSSPRNHSAMGEERTLGKSNSIKIRGENGKSARDPRLSKREESIAKIGKKKYQKINLDEAEEFFELISKAQSNRADDQRGLLRKEDLVLPEFLRLPPGSSELALSSPPPVKGFSKRAVTSHGQEGAVQTEESYSDSPATSPASAQSPCSAYSPGSAHSPGSAHSPGSAHSTPGPPGTAQPGEKPTKPSCISTVQEGTTQAWRRLSPELEAGGIQTVEEEQVADLTLMGEGDISSPNSTLLPPPPLPQDTPGPTRPGTSRF</sequence>
<reference key="1">
    <citation type="journal article" date="1997" name="Biochem. Biophys. Res. Commun.">
        <title>Molecular cloning and expression analysis of rat Rgs12 and Rgs14.</title>
        <authorList>
            <person name="Snow B.E."/>
            <person name="Antonio L."/>
            <person name="Suggs S."/>
            <person name="Gutstein H.B."/>
            <person name="Siderovski D.P."/>
        </authorList>
    </citation>
    <scope>NUCLEOTIDE SEQUENCE [MRNA]</scope>
    <scope>TISSUE SPECIFICITY</scope>
    <source>
        <tissue>Brain</tissue>
    </source>
</reference>
<reference key="2">
    <citation type="journal article" date="1998" name="J. Biol. Chem.">
        <title>GTPase activating specificity of RGS12 and binding specificity of an alternatively spliced PDZ (PSD-95/Dlg/ZO-1) domain.</title>
        <authorList>
            <person name="Snow B.E."/>
            <person name="Hall R.A."/>
            <person name="Krumins A.M."/>
            <person name="Brothers G.M."/>
            <person name="Bouchard D."/>
            <person name="Brothers C.A."/>
            <person name="Chung S."/>
            <person name="Mangion J."/>
            <person name="Gilman A.G."/>
            <person name="Lefkowitz R.J."/>
            <person name="Siderovski D.P."/>
        </authorList>
    </citation>
    <scope>NUCLEOTIDE SEQUENCE [MRNA]</scope>
    <scope>ALTERNATIVE SPLICING</scope>
    <scope>FUNCTION</scope>
    <source>
        <tissue>Brain</tissue>
    </source>
</reference>
<reference key="3">
    <citation type="journal article" date="2001" name="J. Biol. Chem.">
        <title>RGS12 and RGS14 GoLoco motifs are G alpha(i) interaction sites with guanine nucleotide dissociation inhibitor activity.</title>
        <authorList>
            <person name="Kimple R.J."/>
            <person name="De Vries L."/>
            <person name="Tronchere H."/>
            <person name="Behe C.I."/>
            <person name="Morris R.A."/>
            <person name="Gist Farquhar M."/>
            <person name="Siderovski D.P."/>
        </authorList>
    </citation>
    <scope>FUNCTION</scope>
    <scope>INTERACTION WITH GNAI1; GNAI2 AND GNAI3</scope>
</reference>
<reference key="4">
    <citation type="journal article" date="2006" name="Eur. J. Neurosci.">
        <title>Localization of the GoLoco motif carrier regulator of G-protein signalling 12 and 14 proteins in monkey and rat brain.</title>
        <authorList>
            <person name="Lopez-Aranda M.F."/>
            <person name="Acevedo M.J."/>
            <person name="Carballo F.J."/>
            <person name="Gutierrez A."/>
            <person name="Khan Z.U."/>
        </authorList>
    </citation>
    <scope>SUBCELLULAR LOCATION</scope>
    <scope>TISSUE SPECIFICITY</scope>
</reference>
<reference key="5">
    <citation type="journal article" date="2012" name="Nat. Commun.">
        <title>Quantitative maps of protein phosphorylation sites across 14 different rat organs and tissues.</title>
        <authorList>
            <person name="Lundby A."/>
            <person name="Secher A."/>
            <person name="Lage K."/>
            <person name="Nordsborg N.B."/>
            <person name="Dmytriyev A."/>
            <person name="Lundby C."/>
            <person name="Olsen J.V."/>
        </authorList>
    </citation>
    <scope>PHOSPHORYLATION [LARGE SCALE ANALYSIS] AT SER-171; SER-661; SER-671 AND SER-879</scope>
    <scope>IDENTIFICATION BY MASS SPECTROMETRY [LARGE SCALE ANALYSIS]</scope>
</reference>
<name>RGS12_RAT</name>
<proteinExistence type="evidence at protein level"/>
<organism>
    <name type="scientific">Rattus norvegicus</name>
    <name type="common">Rat</name>
    <dbReference type="NCBI Taxonomy" id="10116"/>
    <lineage>
        <taxon>Eukaryota</taxon>
        <taxon>Metazoa</taxon>
        <taxon>Chordata</taxon>
        <taxon>Craniata</taxon>
        <taxon>Vertebrata</taxon>
        <taxon>Euteleostomi</taxon>
        <taxon>Mammalia</taxon>
        <taxon>Eutheria</taxon>
        <taxon>Euarchontoglires</taxon>
        <taxon>Glires</taxon>
        <taxon>Rodentia</taxon>
        <taxon>Myomorpha</taxon>
        <taxon>Muroidea</taxon>
        <taxon>Muridae</taxon>
        <taxon>Murinae</taxon>
        <taxon>Rattus</taxon>
    </lineage>
</organism>
<keyword id="KW-0025">Alternative splicing</keyword>
<keyword id="KW-0966">Cell projection</keyword>
<keyword id="KW-0963">Cytoplasm</keyword>
<keyword id="KW-0343">GTPase activation</keyword>
<keyword id="KW-1017">Isopeptide bond</keyword>
<keyword id="KW-0488">Methylation</keyword>
<keyword id="KW-0539">Nucleus</keyword>
<keyword id="KW-0597">Phosphoprotein</keyword>
<keyword id="KW-1185">Reference proteome</keyword>
<keyword id="KW-0677">Repeat</keyword>
<keyword id="KW-0734">Signal transduction inhibitor</keyword>
<keyword id="KW-0770">Synapse</keyword>
<keyword id="KW-0832">Ubl conjugation</keyword>
<dbReference type="EMBL" id="U92280">
    <property type="protein sequence ID" value="AAC53176.1"/>
    <property type="molecule type" value="mRNA"/>
</dbReference>
<dbReference type="EMBL" id="AF035151">
    <property type="protein sequence ID" value="AAC40154.1"/>
    <property type="molecule type" value="mRNA"/>
</dbReference>
<dbReference type="PIR" id="JC5502">
    <property type="entry name" value="JC5502"/>
</dbReference>
<dbReference type="RefSeq" id="NP_062212.1">
    <property type="nucleotide sequence ID" value="NM_019339.1"/>
</dbReference>
<dbReference type="SMR" id="O08774"/>
<dbReference type="BioGRID" id="248512">
    <property type="interactions" value="10"/>
</dbReference>
<dbReference type="FunCoup" id="O08774">
    <property type="interactions" value="2186"/>
</dbReference>
<dbReference type="IntAct" id="O08774">
    <property type="interactions" value="3"/>
</dbReference>
<dbReference type="MINT" id="O08774"/>
<dbReference type="STRING" id="10116.ENSRNOP00000045065"/>
<dbReference type="GlyGen" id="O08774">
    <property type="glycosylation" value="1 site"/>
</dbReference>
<dbReference type="iPTMnet" id="O08774"/>
<dbReference type="PhosphoSitePlus" id="O08774"/>
<dbReference type="PaxDb" id="10116-ENSRNOP00000045065"/>
<dbReference type="GeneID" id="54292"/>
<dbReference type="KEGG" id="rno:54292"/>
<dbReference type="AGR" id="RGD:3564"/>
<dbReference type="CTD" id="6002"/>
<dbReference type="RGD" id="3564">
    <property type="gene designation" value="Rgs12"/>
</dbReference>
<dbReference type="eggNOG" id="KOG3589">
    <property type="taxonomic scope" value="Eukaryota"/>
</dbReference>
<dbReference type="InParanoid" id="O08774"/>
<dbReference type="PhylomeDB" id="O08774"/>
<dbReference type="Reactome" id="R-RNO-418594">
    <property type="pathway name" value="G alpha (i) signalling events"/>
</dbReference>
<dbReference type="PRO" id="PR:O08774"/>
<dbReference type="Proteomes" id="UP000002494">
    <property type="component" value="Unplaced"/>
</dbReference>
<dbReference type="GO" id="GO:0097440">
    <property type="term" value="C:apical dendrite"/>
    <property type="evidence" value="ECO:0000314"/>
    <property type="project" value="RGD"/>
</dbReference>
<dbReference type="GO" id="GO:0005737">
    <property type="term" value="C:cytoplasm"/>
    <property type="evidence" value="ECO:0000314"/>
    <property type="project" value="UniProtKB"/>
</dbReference>
<dbReference type="GO" id="GO:0030425">
    <property type="term" value="C:dendrite"/>
    <property type="evidence" value="ECO:0000314"/>
    <property type="project" value="UniProtKB"/>
</dbReference>
<dbReference type="GO" id="GO:0043025">
    <property type="term" value="C:neuronal cell body"/>
    <property type="evidence" value="ECO:0000314"/>
    <property type="project" value="RGD"/>
</dbReference>
<dbReference type="GO" id="GO:0005634">
    <property type="term" value="C:nucleus"/>
    <property type="evidence" value="ECO:0000314"/>
    <property type="project" value="UniProtKB"/>
</dbReference>
<dbReference type="GO" id="GO:0005886">
    <property type="term" value="C:plasma membrane"/>
    <property type="evidence" value="ECO:0000318"/>
    <property type="project" value="GO_Central"/>
</dbReference>
<dbReference type="GO" id="GO:0032991">
    <property type="term" value="C:protein-containing complex"/>
    <property type="evidence" value="ECO:0000314"/>
    <property type="project" value="RGD"/>
</dbReference>
<dbReference type="GO" id="GO:0045202">
    <property type="term" value="C:synapse"/>
    <property type="evidence" value="ECO:0007669"/>
    <property type="project" value="UniProtKB-SubCell"/>
</dbReference>
<dbReference type="GO" id="GO:0001965">
    <property type="term" value="F:G-protein alpha-subunit binding"/>
    <property type="evidence" value="ECO:0000353"/>
    <property type="project" value="RGD"/>
</dbReference>
<dbReference type="GO" id="GO:0005096">
    <property type="term" value="F:GTPase activator activity"/>
    <property type="evidence" value="ECO:0000314"/>
    <property type="project" value="RGD"/>
</dbReference>
<dbReference type="GO" id="GO:0030695">
    <property type="term" value="F:GTPase regulator activity"/>
    <property type="evidence" value="ECO:0000266"/>
    <property type="project" value="RGD"/>
</dbReference>
<dbReference type="GO" id="GO:0045744">
    <property type="term" value="P:negative regulation of G protein-coupled receptor signaling pathway"/>
    <property type="evidence" value="ECO:0000270"/>
    <property type="project" value="RGD"/>
</dbReference>
<dbReference type="GO" id="GO:0008277">
    <property type="term" value="P:regulation of G protein-coupled receptor signaling pathway"/>
    <property type="evidence" value="ECO:0000318"/>
    <property type="project" value="GO_Central"/>
</dbReference>
<dbReference type="GO" id="GO:0007165">
    <property type="term" value="P:signal transduction"/>
    <property type="evidence" value="ECO:0007669"/>
    <property type="project" value="InterPro"/>
</dbReference>
<dbReference type="GO" id="GO:0038032">
    <property type="term" value="P:termination of G protein-coupled receptor signaling pathway"/>
    <property type="evidence" value="ECO:0000314"/>
    <property type="project" value="RGD"/>
</dbReference>
<dbReference type="CDD" id="cd06710">
    <property type="entry name" value="PDZ_RGS12-like"/>
    <property type="match status" value="1"/>
</dbReference>
<dbReference type="CDD" id="cd13162">
    <property type="entry name" value="PTB_RGS12"/>
    <property type="match status" value="1"/>
</dbReference>
<dbReference type="CDD" id="cd17136">
    <property type="entry name" value="RBD1_RGS12"/>
    <property type="match status" value="1"/>
</dbReference>
<dbReference type="CDD" id="cd08742">
    <property type="entry name" value="RGS_RGS12"/>
    <property type="match status" value="1"/>
</dbReference>
<dbReference type="FunFam" id="1.10.167.10:FF:000001">
    <property type="entry name" value="Putative regulator of g-protein signaling 12"/>
    <property type="match status" value="1"/>
</dbReference>
<dbReference type="FunFam" id="2.30.29.30:FF:000296">
    <property type="entry name" value="Regulator of G protein signaling 12"/>
    <property type="match status" value="1"/>
</dbReference>
<dbReference type="FunFam" id="2.30.42.10:FF:000115">
    <property type="entry name" value="Regulator of G-protein signaling 12"/>
    <property type="match status" value="1"/>
</dbReference>
<dbReference type="FunFam" id="3.10.20.90:FF:000152">
    <property type="entry name" value="regulator of G-protein signaling 12"/>
    <property type="match status" value="1"/>
</dbReference>
<dbReference type="Gene3D" id="1.10.196.10">
    <property type="match status" value="1"/>
</dbReference>
<dbReference type="Gene3D" id="2.30.42.10">
    <property type="match status" value="1"/>
</dbReference>
<dbReference type="Gene3D" id="3.10.20.90">
    <property type="entry name" value="Phosphatidylinositol 3-kinase Catalytic Subunit, Chain A, domain 1"/>
    <property type="match status" value="2"/>
</dbReference>
<dbReference type="Gene3D" id="2.30.29.30">
    <property type="entry name" value="Pleckstrin-homology domain (PH domain)/Phosphotyrosine-binding domain (PTB)"/>
    <property type="match status" value="1"/>
</dbReference>
<dbReference type="Gene3D" id="1.10.167.10">
    <property type="entry name" value="Regulator of G-protein Signalling 4, domain 2"/>
    <property type="match status" value="1"/>
</dbReference>
<dbReference type="InterPro" id="IPR003109">
    <property type="entry name" value="GoLoco_motif"/>
</dbReference>
<dbReference type="InterPro" id="IPR001478">
    <property type="entry name" value="PDZ"/>
</dbReference>
<dbReference type="InterPro" id="IPR036034">
    <property type="entry name" value="PDZ_sf"/>
</dbReference>
<dbReference type="InterPro" id="IPR011993">
    <property type="entry name" value="PH-like_dom_sf"/>
</dbReference>
<dbReference type="InterPro" id="IPR006020">
    <property type="entry name" value="PTB/PI_dom"/>
</dbReference>
<dbReference type="InterPro" id="IPR003116">
    <property type="entry name" value="RBD_dom"/>
</dbReference>
<dbReference type="InterPro" id="IPR016137">
    <property type="entry name" value="RGS"/>
</dbReference>
<dbReference type="InterPro" id="IPR046995">
    <property type="entry name" value="RGS10/12/14-like"/>
</dbReference>
<dbReference type="InterPro" id="IPR037880">
    <property type="entry name" value="RGS12_RGS"/>
</dbReference>
<dbReference type="InterPro" id="IPR036305">
    <property type="entry name" value="RGS_sf"/>
</dbReference>
<dbReference type="InterPro" id="IPR024066">
    <property type="entry name" value="RGS_subdom1/3"/>
</dbReference>
<dbReference type="InterPro" id="IPR044926">
    <property type="entry name" value="RGS_subdomain_2"/>
</dbReference>
<dbReference type="InterPro" id="IPR029071">
    <property type="entry name" value="Ubiquitin-like_domsf"/>
</dbReference>
<dbReference type="PANTHER" id="PTHR45945:SF1">
    <property type="entry name" value="REGULATOR OF G-PROTEIN SIGNALING 12"/>
    <property type="match status" value="1"/>
</dbReference>
<dbReference type="PANTHER" id="PTHR45945">
    <property type="entry name" value="REGULATOR OF G-PROTEIN SIGNALING LOCO"/>
    <property type="match status" value="1"/>
</dbReference>
<dbReference type="Pfam" id="PF02188">
    <property type="entry name" value="GoLoco"/>
    <property type="match status" value="1"/>
</dbReference>
<dbReference type="Pfam" id="PF00595">
    <property type="entry name" value="PDZ"/>
    <property type="match status" value="1"/>
</dbReference>
<dbReference type="Pfam" id="PF02196">
    <property type="entry name" value="RBD"/>
    <property type="match status" value="1"/>
</dbReference>
<dbReference type="Pfam" id="PF00615">
    <property type="entry name" value="RGS"/>
    <property type="match status" value="1"/>
</dbReference>
<dbReference type="Pfam" id="PF16613">
    <property type="entry name" value="RGS12_us1"/>
    <property type="match status" value="1"/>
</dbReference>
<dbReference type="Pfam" id="PF16611">
    <property type="entry name" value="RGS12_us2"/>
    <property type="match status" value="1"/>
</dbReference>
<dbReference type="Pfam" id="PF16612">
    <property type="entry name" value="RGS12_usC"/>
    <property type="match status" value="1"/>
</dbReference>
<dbReference type="PRINTS" id="PR01301">
    <property type="entry name" value="RGSPROTEIN"/>
</dbReference>
<dbReference type="SMART" id="SM00390">
    <property type="entry name" value="GoLoco"/>
    <property type="match status" value="1"/>
</dbReference>
<dbReference type="SMART" id="SM00228">
    <property type="entry name" value="PDZ"/>
    <property type="match status" value="1"/>
</dbReference>
<dbReference type="SMART" id="SM00462">
    <property type="entry name" value="PTB"/>
    <property type="match status" value="1"/>
</dbReference>
<dbReference type="SMART" id="SM00455">
    <property type="entry name" value="RBD"/>
    <property type="match status" value="2"/>
</dbReference>
<dbReference type="SMART" id="SM00315">
    <property type="entry name" value="RGS"/>
    <property type="match status" value="1"/>
</dbReference>
<dbReference type="SUPFAM" id="SSF50156">
    <property type="entry name" value="PDZ domain-like"/>
    <property type="match status" value="1"/>
</dbReference>
<dbReference type="SUPFAM" id="SSF50729">
    <property type="entry name" value="PH domain-like"/>
    <property type="match status" value="1"/>
</dbReference>
<dbReference type="SUPFAM" id="SSF48097">
    <property type="entry name" value="Regulator of G-protein signaling, RGS"/>
    <property type="match status" value="1"/>
</dbReference>
<dbReference type="SUPFAM" id="SSF54236">
    <property type="entry name" value="Ubiquitin-like"/>
    <property type="match status" value="2"/>
</dbReference>
<dbReference type="PROSITE" id="PS50877">
    <property type="entry name" value="GOLOCO"/>
    <property type="match status" value="1"/>
</dbReference>
<dbReference type="PROSITE" id="PS50106">
    <property type="entry name" value="PDZ"/>
    <property type="match status" value="1"/>
</dbReference>
<dbReference type="PROSITE" id="PS01179">
    <property type="entry name" value="PID"/>
    <property type="match status" value="1"/>
</dbReference>
<dbReference type="PROSITE" id="PS50898">
    <property type="entry name" value="RBD"/>
    <property type="match status" value="2"/>
</dbReference>
<dbReference type="PROSITE" id="PS50132">
    <property type="entry name" value="RGS"/>
    <property type="match status" value="1"/>
</dbReference>
<protein>
    <recommendedName>
        <fullName>Regulator of G-protein signaling 12</fullName>
        <shortName>RGS12</shortName>
    </recommendedName>
</protein>